<comment type="function">
    <text evidence="1">Activator of cell division through the inhibition of FtsZ GTPase activity, therefore promoting FtsZ assembly into bundles of protofilaments necessary for the formation of the division Z ring. It is recruited early at mid-cell but it is not essential for cell division.</text>
</comment>
<comment type="subunit">
    <text evidence="1">Homodimer. Interacts with FtsZ.</text>
</comment>
<comment type="subcellular location">
    <subcellularLocation>
        <location evidence="1">Cytoplasm</location>
    </subcellularLocation>
    <text evidence="1">Localizes at mid-cell.</text>
</comment>
<comment type="similarity">
    <text evidence="1">Belongs to the ZapA family. Type 1 subfamily.</text>
</comment>
<dbReference type="EMBL" id="AE005674">
    <property type="protein sequence ID" value="AAN44380.1"/>
    <property type="molecule type" value="Genomic_DNA"/>
</dbReference>
<dbReference type="EMBL" id="AE014073">
    <property type="protein sequence ID" value="AAP18202.1"/>
    <property type="molecule type" value="Genomic_DNA"/>
</dbReference>
<dbReference type="RefSeq" id="WP_001276008.1">
    <property type="nucleotide sequence ID" value="NZ_WPGW01000018.1"/>
</dbReference>
<dbReference type="SMR" id="P0ADS5"/>
<dbReference type="STRING" id="198214.SF2896"/>
<dbReference type="PaxDb" id="198214-SF2896"/>
<dbReference type="GeneID" id="93779091"/>
<dbReference type="KEGG" id="sfl:SF2896"/>
<dbReference type="KEGG" id="sfx:S3095"/>
<dbReference type="PATRIC" id="fig|198214.7.peg.3445"/>
<dbReference type="HOGENOM" id="CLU_116623_3_0_6"/>
<dbReference type="Proteomes" id="UP000001006">
    <property type="component" value="Chromosome"/>
</dbReference>
<dbReference type="Proteomes" id="UP000002673">
    <property type="component" value="Chromosome"/>
</dbReference>
<dbReference type="GO" id="GO:0032153">
    <property type="term" value="C:cell division site"/>
    <property type="evidence" value="ECO:0007669"/>
    <property type="project" value="TreeGrafter"/>
</dbReference>
<dbReference type="GO" id="GO:0030428">
    <property type="term" value="C:cell septum"/>
    <property type="evidence" value="ECO:0007669"/>
    <property type="project" value="TreeGrafter"/>
</dbReference>
<dbReference type="GO" id="GO:0005829">
    <property type="term" value="C:cytosol"/>
    <property type="evidence" value="ECO:0007669"/>
    <property type="project" value="TreeGrafter"/>
</dbReference>
<dbReference type="GO" id="GO:0005886">
    <property type="term" value="C:plasma membrane"/>
    <property type="evidence" value="ECO:0007669"/>
    <property type="project" value="UniProtKB-UniRule"/>
</dbReference>
<dbReference type="GO" id="GO:0000917">
    <property type="term" value="P:division septum assembly"/>
    <property type="evidence" value="ECO:0007669"/>
    <property type="project" value="UniProtKB-KW"/>
</dbReference>
<dbReference type="GO" id="GO:0043093">
    <property type="term" value="P:FtsZ-dependent cytokinesis"/>
    <property type="evidence" value="ECO:0007669"/>
    <property type="project" value="TreeGrafter"/>
</dbReference>
<dbReference type="GO" id="GO:0000921">
    <property type="term" value="P:septin ring assembly"/>
    <property type="evidence" value="ECO:0007669"/>
    <property type="project" value="TreeGrafter"/>
</dbReference>
<dbReference type="FunFam" id="1.20.5.50:FF:000001">
    <property type="entry name" value="Cell division protein ZapA"/>
    <property type="match status" value="1"/>
</dbReference>
<dbReference type="FunFam" id="3.30.160.880:FF:000001">
    <property type="entry name" value="Cell division protein ZapA"/>
    <property type="match status" value="1"/>
</dbReference>
<dbReference type="Gene3D" id="1.20.5.50">
    <property type="match status" value="1"/>
</dbReference>
<dbReference type="Gene3D" id="3.30.160.880">
    <property type="entry name" value="Cell division protein ZapA protomer, N-terminal domain"/>
    <property type="match status" value="1"/>
</dbReference>
<dbReference type="HAMAP" id="MF_02012">
    <property type="entry name" value="ZapA_type1"/>
    <property type="match status" value="1"/>
</dbReference>
<dbReference type="InterPro" id="IPR007838">
    <property type="entry name" value="Cell_div_ZapA-like"/>
</dbReference>
<dbReference type="InterPro" id="IPR036192">
    <property type="entry name" value="Cell_div_ZapA-like_sf"/>
</dbReference>
<dbReference type="InterPro" id="IPR023771">
    <property type="entry name" value="Cell_div_ZapA_eubact"/>
</dbReference>
<dbReference type="InterPro" id="IPR042233">
    <property type="entry name" value="Cell_div_ZapA_N"/>
</dbReference>
<dbReference type="NCBIfam" id="NF008209">
    <property type="entry name" value="PRK10972.1"/>
    <property type="match status" value="1"/>
</dbReference>
<dbReference type="PANTHER" id="PTHR34981">
    <property type="entry name" value="CELL DIVISION PROTEIN ZAPA"/>
    <property type="match status" value="1"/>
</dbReference>
<dbReference type="PANTHER" id="PTHR34981:SF1">
    <property type="entry name" value="CELL DIVISION PROTEIN ZAPA"/>
    <property type="match status" value="1"/>
</dbReference>
<dbReference type="Pfam" id="PF05164">
    <property type="entry name" value="ZapA"/>
    <property type="match status" value="1"/>
</dbReference>
<dbReference type="SUPFAM" id="SSF102829">
    <property type="entry name" value="Cell division protein ZapA-like"/>
    <property type="match status" value="1"/>
</dbReference>
<sequence length="109" mass="12594">MSAQPVDIQIFGRSLRVNCPPDQRDALNQAADDLNQRLQDLKERTRVTNTEQLVFIAALNISYELAQEKAKTRDYAASMEQRIRMLQQTIEQALLEQGRITEKTNQNFE</sequence>
<evidence type="ECO:0000255" key="1">
    <source>
        <dbReference type="HAMAP-Rule" id="MF_02012"/>
    </source>
</evidence>
<organism>
    <name type="scientific">Shigella flexneri</name>
    <dbReference type="NCBI Taxonomy" id="623"/>
    <lineage>
        <taxon>Bacteria</taxon>
        <taxon>Pseudomonadati</taxon>
        <taxon>Pseudomonadota</taxon>
        <taxon>Gammaproteobacteria</taxon>
        <taxon>Enterobacterales</taxon>
        <taxon>Enterobacteriaceae</taxon>
        <taxon>Shigella</taxon>
    </lineage>
</organism>
<gene>
    <name evidence="1" type="primary">zapA</name>
    <name type="ordered locus">SF2896</name>
    <name type="ordered locus">S3095</name>
</gene>
<protein>
    <recommendedName>
        <fullName evidence="1">Cell division protein ZapA</fullName>
    </recommendedName>
    <alternativeName>
        <fullName evidence="1">Z ring-associated protein ZapA</fullName>
    </alternativeName>
</protein>
<feature type="chain" id="PRO_0000169353" description="Cell division protein ZapA">
    <location>
        <begin position="1"/>
        <end position="109"/>
    </location>
</feature>
<feature type="coiled-coil region" evidence="1">
    <location>
        <begin position="21"/>
        <end position="99"/>
    </location>
</feature>
<name>ZAPA_SHIFL</name>
<keyword id="KW-0131">Cell cycle</keyword>
<keyword id="KW-0132">Cell division</keyword>
<keyword id="KW-0175">Coiled coil</keyword>
<keyword id="KW-0963">Cytoplasm</keyword>
<keyword id="KW-1185">Reference proteome</keyword>
<keyword id="KW-0717">Septation</keyword>
<accession>P0ADS5</accession>
<accession>P45580</accession>
<reference key="1">
    <citation type="journal article" date="2002" name="Nucleic Acids Res.">
        <title>Genome sequence of Shigella flexneri 2a: insights into pathogenicity through comparison with genomes of Escherichia coli K12 and O157.</title>
        <authorList>
            <person name="Jin Q."/>
            <person name="Yuan Z."/>
            <person name="Xu J."/>
            <person name="Wang Y."/>
            <person name="Shen Y."/>
            <person name="Lu W."/>
            <person name="Wang J."/>
            <person name="Liu H."/>
            <person name="Yang J."/>
            <person name="Yang F."/>
            <person name="Zhang X."/>
            <person name="Zhang J."/>
            <person name="Yang G."/>
            <person name="Wu H."/>
            <person name="Qu D."/>
            <person name="Dong J."/>
            <person name="Sun L."/>
            <person name="Xue Y."/>
            <person name="Zhao A."/>
            <person name="Gao Y."/>
            <person name="Zhu J."/>
            <person name="Kan B."/>
            <person name="Ding K."/>
            <person name="Chen S."/>
            <person name="Cheng H."/>
            <person name="Yao Z."/>
            <person name="He B."/>
            <person name="Chen R."/>
            <person name="Ma D."/>
            <person name="Qiang B."/>
            <person name="Wen Y."/>
            <person name="Hou Y."/>
            <person name="Yu J."/>
        </authorList>
    </citation>
    <scope>NUCLEOTIDE SEQUENCE [LARGE SCALE GENOMIC DNA]</scope>
    <source>
        <strain>301 / Serotype 2a</strain>
    </source>
</reference>
<reference key="2">
    <citation type="journal article" date="2003" name="Infect. Immun.">
        <title>Complete genome sequence and comparative genomics of Shigella flexneri serotype 2a strain 2457T.</title>
        <authorList>
            <person name="Wei J."/>
            <person name="Goldberg M.B."/>
            <person name="Burland V."/>
            <person name="Venkatesan M.M."/>
            <person name="Deng W."/>
            <person name="Fournier G."/>
            <person name="Mayhew G.F."/>
            <person name="Plunkett G. III"/>
            <person name="Rose D.J."/>
            <person name="Darling A."/>
            <person name="Mau B."/>
            <person name="Perna N.T."/>
            <person name="Payne S.M."/>
            <person name="Runyen-Janecky L.J."/>
            <person name="Zhou S."/>
            <person name="Schwartz D.C."/>
            <person name="Blattner F.R."/>
        </authorList>
    </citation>
    <scope>NUCLEOTIDE SEQUENCE [LARGE SCALE GENOMIC DNA]</scope>
    <source>
        <strain>ATCC 700930 / 2457T / Serotype 2a</strain>
    </source>
</reference>
<proteinExistence type="inferred from homology"/>